<protein>
    <recommendedName>
        <fullName evidence="1">Xylose import ATP-binding protein XylG</fullName>
        <ecNumber evidence="1">7.5.2.10</ecNumber>
    </recommendedName>
</protein>
<reference key="1">
    <citation type="journal article" date="2001" name="Nature">
        <title>Genome sequence of Yersinia pestis, the causative agent of plague.</title>
        <authorList>
            <person name="Parkhill J."/>
            <person name="Wren B.W."/>
            <person name="Thomson N.R."/>
            <person name="Titball R.W."/>
            <person name="Holden M.T.G."/>
            <person name="Prentice M.B."/>
            <person name="Sebaihia M."/>
            <person name="James K.D."/>
            <person name="Churcher C.M."/>
            <person name="Mungall K.L."/>
            <person name="Baker S."/>
            <person name="Basham D."/>
            <person name="Bentley S.D."/>
            <person name="Brooks K."/>
            <person name="Cerdeno-Tarraga A.-M."/>
            <person name="Chillingworth T."/>
            <person name="Cronin A."/>
            <person name="Davies R.M."/>
            <person name="Davis P."/>
            <person name="Dougan G."/>
            <person name="Feltwell T."/>
            <person name="Hamlin N."/>
            <person name="Holroyd S."/>
            <person name="Jagels K."/>
            <person name="Karlyshev A.V."/>
            <person name="Leather S."/>
            <person name="Moule S."/>
            <person name="Oyston P.C.F."/>
            <person name="Quail M.A."/>
            <person name="Rutherford K.M."/>
            <person name="Simmonds M."/>
            <person name="Skelton J."/>
            <person name="Stevens K."/>
            <person name="Whitehead S."/>
            <person name="Barrell B.G."/>
        </authorList>
    </citation>
    <scope>NUCLEOTIDE SEQUENCE [LARGE SCALE GENOMIC DNA]</scope>
    <source>
        <strain>CO-92 / Biovar Orientalis</strain>
    </source>
</reference>
<reference key="2">
    <citation type="journal article" date="2002" name="J. Bacteriol.">
        <title>Genome sequence of Yersinia pestis KIM.</title>
        <authorList>
            <person name="Deng W."/>
            <person name="Burland V."/>
            <person name="Plunkett G. III"/>
            <person name="Boutin A."/>
            <person name="Mayhew G.F."/>
            <person name="Liss P."/>
            <person name="Perna N.T."/>
            <person name="Rose D.J."/>
            <person name="Mau B."/>
            <person name="Zhou S."/>
            <person name="Schwartz D.C."/>
            <person name="Fetherston J.D."/>
            <person name="Lindler L.E."/>
            <person name="Brubaker R.R."/>
            <person name="Plano G.V."/>
            <person name="Straley S.C."/>
            <person name="McDonough K.A."/>
            <person name="Nilles M.L."/>
            <person name="Matson J.S."/>
            <person name="Blattner F.R."/>
            <person name="Perry R.D."/>
        </authorList>
    </citation>
    <scope>NUCLEOTIDE SEQUENCE [LARGE SCALE GENOMIC DNA]</scope>
    <source>
        <strain>KIM10+ / Biovar Mediaevalis</strain>
    </source>
</reference>
<reference key="3">
    <citation type="journal article" date="2004" name="DNA Res.">
        <title>Complete genome sequence of Yersinia pestis strain 91001, an isolate avirulent to humans.</title>
        <authorList>
            <person name="Song Y."/>
            <person name="Tong Z."/>
            <person name="Wang J."/>
            <person name="Wang L."/>
            <person name="Guo Z."/>
            <person name="Han Y."/>
            <person name="Zhang J."/>
            <person name="Pei D."/>
            <person name="Zhou D."/>
            <person name="Qin H."/>
            <person name="Pang X."/>
            <person name="Han Y."/>
            <person name="Zhai J."/>
            <person name="Li M."/>
            <person name="Cui B."/>
            <person name="Qi Z."/>
            <person name="Jin L."/>
            <person name="Dai R."/>
            <person name="Chen F."/>
            <person name="Li S."/>
            <person name="Ye C."/>
            <person name="Du Z."/>
            <person name="Lin W."/>
            <person name="Wang J."/>
            <person name="Yu J."/>
            <person name="Yang H."/>
            <person name="Wang J."/>
            <person name="Huang P."/>
            <person name="Yang R."/>
        </authorList>
    </citation>
    <scope>NUCLEOTIDE SEQUENCE [LARGE SCALE GENOMIC DNA]</scope>
    <source>
        <strain>91001 / Biovar Mediaevalis</strain>
    </source>
</reference>
<feature type="chain" id="PRO_0000271518" description="Xylose import ATP-binding protein XylG">
    <location>
        <begin position="1"/>
        <end position="510"/>
    </location>
</feature>
<feature type="domain" description="ABC transporter 1" evidence="1">
    <location>
        <begin position="5"/>
        <end position="242"/>
    </location>
</feature>
<feature type="domain" description="ABC transporter 2" evidence="1">
    <location>
        <begin position="259"/>
        <end position="505"/>
    </location>
</feature>
<feature type="binding site" evidence="1">
    <location>
        <begin position="37"/>
        <end position="44"/>
    </location>
    <ligand>
        <name>ATP</name>
        <dbReference type="ChEBI" id="CHEBI:30616"/>
    </ligand>
</feature>
<gene>
    <name evidence="1" type="primary">xylG</name>
    <name type="ordered locus">YPO4036</name>
    <name type="ordered locus">y4055</name>
    <name type="ordered locus">YP_3398</name>
</gene>
<keyword id="KW-0067">ATP-binding</keyword>
<keyword id="KW-0997">Cell inner membrane</keyword>
<keyword id="KW-1003">Cell membrane</keyword>
<keyword id="KW-0472">Membrane</keyword>
<keyword id="KW-0547">Nucleotide-binding</keyword>
<keyword id="KW-1185">Reference proteome</keyword>
<keyword id="KW-0677">Repeat</keyword>
<keyword id="KW-0762">Sugar transport</keyword>
<keyword id="KW-1278">Translocase</keyword>
<keyword id="KW-0813">Transport</keyword>
<comment type="function">
    <text evidence="1">Part of the ABC transporter complex XylFGH involved in xylose import. Responsible for energy coupling to the transport system.</text>
</comment>
<comment type="catalytic activity">
    <reaction evidence="1">
        <text>D-xylose(out) + ATP + H2O = D-xylose(in) + ADP + phosphate + H(+)</text>
        <dbReference type="Rhea" id="RHEA:29899"/>
        <dbReference type="ChEBI" id="CHEBI:15377"/>
        <dbReference type="ChEBI" id="CHEBI:15378"/>
        <dbReference type="ChEBI" id="CHEBI:30616"/>
        <dbReference type="ChEBI" id="CHEBI:43474"/>
        <dbReference type="ChEBI" id="CHEBI:53455"/>
        <dbReference type="ChEBI" id="CHEBI:456216"/>
        <dbReference type="EC" id="7.5.2.10"/>
    </reaction>
</comment>
<comment type="subunit">
    <text evidence="1">The complex is composed of two ATP-binding proteins (XylG), two transmembrane proteins (XylH) and a solute-binding protein (XylF).</text>
</comment>
<comment type="subcellular location">
    <subcellularLocation>
        <location evidence="1">Cell inner membrane</location>
        <topology evidence="1">Peripheral membrane protein</topology>
    </subcellularLocation>
</comment>
<comment type="similarity">
    <text evidence="1">Belongs to the ABC transporter superfamily. Xylose importer (TC 3.A.1.2.4) family.</text>
</comment>
<organism>
    <name type="scientific">Yersinia pestis</name>
    <dbReference type="NCBI Taxonomy" id="632"/>
    <lineage>
        <taxon>Bacteria</taxon>
        <taxon>Pseudomonadati</taxon>
        <taxon>Pseudomonadota</taxon>
        <taxon>Gammaproteobacteria</taxon>
        <taxon>Enterobacterales</taxon>
        <taxon>Yersiniaceae</taxon>
        <taxon>Yersinia</taxon>
    </lineage>
</organism>
<name>XYLG_YERPE</name>
<sequence>MPYLLEMKDITKQFGVVKAVDNISLTLEAGQVLSLCGENGSGKSTLMKVLCGIYPVGSYQGEIIFSGETLQAKNIRETEQKGIAIIHQELALVKQMSVLENMFLGSEWGRFGIMDYDAMYLRCQRMLAQVKLVVDPHTPVSELGLGQQQLVEIAKALNKQVRLLVLDEPTASLTESETAILLDIIRDLRNHGIACIYISHKLNEVKEISDHICVIRDGRHIGTRPASTMSEDDIIAMMVGRELKELYPHEAHHIGEEILRVENLCAWHPVNRHIRRVDDVSFSLKRGEILGIAGLVGSGRTETVQCLFGVYPGRWQGDIFIKGQAATIRTCQQAMKLGIAMVPEDRKKDGIVPVMGVGANITLAALDDFTGAFSLLDDAKEQSIIVQSLARLKVKTSSSELAIARLSGGNQQKAILAKCLLLNPQILILDEPTRGIDIGAKYEIYKLINQLVQQGIAVIVISSELPEVLGLSDRVLVMHQGRIKADLINHNLTQEKVMEAALRSETHVTS</sequence>
<proteinExistence type="inferred from homology"/>
<evidence type="ECO:0000255" key="1">
    <source>
        <dbReference type="HAMAP-Rule" id="MF_01722"/>
    </source>
</evidence>
<accession>Q7CFR2</accession>
<accession>Q74QR4</accession>
<dbReference type="EC" id="7.5.2.10" evidence="1"/>
<dbReference type="EMBL" id="AL590842">
    <property type="protein sequence ID" value="CAL22612.1"/>
    <property type="molecule type" value="Genomic_DNA"/>
</dbReference>
<dbReference type="EMBL" id="AE009952">
    <property type="protein sequence ID" value="AAM87599.1"/>
    <property type="molecule type" value="Genomic_DNA"/>
</dbReference>
<dbReference type="EMBL" id="AE017042">
    <property type="protein sequence ID" value="AAS63559.1"/>
    <property type="molecule type" value="Genomic_DNA"/>
</dbReference>
<dbReference type="PIR" id="AI0490">
    <property type="entry name" value="AI0490"/>
</dbReference>
<dbReference type="RefSeq" id="WP_002209590.1">
    <property type="nucleotide sequence ID" value="NZ_WUCM01000040.1"/>
</dbReference>
<dbReference type="RefSeq" id="YP_002348899.1">
    <property type="nucleotide sequence ID" value="NC_003143.1"/>
</dbReference>
<dbReference type="SMR" id="Q7CFR2"/>
<dbReference type="IntAct" id="Q7CFR2">
    <property type="interactions" value="1"/>
</dbReference>
<dbReference type="STRING" id="214092.YPO4036"/>
<dbReference type="PaxDb" id="214092-YPO4036"/>
<dbReference type="DNASU" id="1149002"/>
<dbReference type="EnsemblBacteria" id="AAS63559">
    <property type="protein sequence ID" value="AAS63559"/>
    <property type="gene ID" value="YP_3398"/>
</dbReference>
<dbReference type="KEGG" id="ype:YPO4036"/>
<dbReference type="KEGG" id="ypk:y4055"/>
<dbReference type="KEGG" id="ypm:YP_3398"/>
<dbReference type="PATRIC" id="fig|214092.21.peg.4571"/>
<dbReference type="eggNOG" id="COG1129">
    <property type="taxonomic scope" value="Bacteria"/>
</dbReference>
<dbReference type="HOGENOM" id="CLU_000604_92_3_6"/>
<dbReference type="OMA" id="RMNYPAM"/>
<dbReference type="OrthoDB" id="9776369at2"/>
<dbReference type="Proteomes" id="UP000000815">
    <property type="component" value="Chromosome"/>
</dbReference>
<dbReference type="Proteomes" id="UP000001019">
    <property type="component" value="Chromosome"/>
</dbReference>
<dbReference type="Proteomes" id="UP000002490">
    <property type="component" value="Chromosome"/>
</dbReference>
<dbReference type="GO" id="GO:0005886">
    <property type="term" value="C:plasma membrane"/>
    <property type="evidence" value="ECO:0007669"/>
    <property type="project" value="UniProtKB-SubCell"/>
</dbReference>
<dbReference type="GO" id="GO:0015614">
    <property type="term" value="F:ABC-type D-xylose transporter activity"/>
    <property type="evidence" value="ECO:0007669"/>
    <property type="project" value="UniProtKB-EC"/>
</dbReference>
<dbReference type="GO" id="GO:0005524">
    <property type="term" value="F:ATP binding"/>
    <property type="evidence" value="ECO:0007669"/>
    <property type="project" value="UniProtKB-KW"/>
</dbReference>
<dbReference type="GO" id="GO:0016887">
    <property type="term" value="F:ATP hydrolysis activity"/>
    <property type="evidence" value="ECO:0007669"/>
    <property type="project" value="InterPro"/>
</dbReference>
<dbReference type="CDD" id="cd03216">
    <property type="entry name" value="ABC_Carb_Monos_I"/>
    <property type="match status" value="1"/>
</dbReference>
<dbReference type="CDD" id="cd03215">
    <property type="entry name" value="ABC_Carb_Monos_II"/>
    <property type="match status" value="1"/>
</dbReference>
<dbReference type="FunFam" id="3.40.50.300:FF:000126">
    <property type="entry name" value="Galactose/methyl galactoside import ATP-binding protein MglA"/>
    <property type="match status" value="1"/>
</dbReference>
<dbReference type="FunFam" id="3.40.50.300:FF:000127">
    <property type="entry name" value="Ribose import ATP-binding protein RbsA"/>
    <property type="match status" value="1"/>
</dbReference>
<dbReference type="Gene3D" id="3.40.50.300">
    <property type="entry name" value="P-loop containing nucleotide triphosphate hydrolases"/>
    <property type="match status" value="2"/>
</dbReference>
<dbReference type="InterPro" id="IPR003593">
    <property type="entry name" value="AAA+_ATPase"/>
</dbReference>
<dbReference type="InterPro" id="IPR050107">
    <property type="entry name" value="ABC_carbohydrate_import_ATPase"/>
</dbReference>
<dbReference type="InterPro" id="IPR003439">
    <property type="entry name" value="ABC_transporter-like_ATP-bd"/>
</dbReference>
<dbReference type="InterPro" id="IPR017871">
    <property type="entry name" value="ABC_transporter-like_CS"/>
</dbReference>
<dbReference type="InterPro" id="IPR013455">
    <property type="entry name" value="ABC_transptr_XylG"/>
</dbReference>
<dbReference type="InterPro" id="IPR027417">
    <property type="entry name" value="P-loop_NTPase"/>
</dbReference>
<dbReference type="NCBIfam" id="NF010069">
    <property type="entry name" value="PRK13549.1"/>
    <property type="match status" value="1"/>
</dbReference>
<dbReference type="NCBIfam" id="TIGR02633">
    <property type="entry name" value="xylG"/>
    <property type="match status" value="1"/>
</dbReference>
<dbReference type="PANTHER" id="PTHR43790">
    <property type="entry name" value="CARBOHYDRATE TRANSPORT ATP-BINDING PROTEIN MG119-RELATED"/>
    <property type="match status" value="1"/>
</dbReference>
<dbReference type="PANTHER" id="PTHR43790:SF1">
    <property type="entry name" value="XYLOSE IMPORT ATP-BINDING PROTEIN XYLG"/>
    <property type="match status" value="1"/>
</dbReference>
<dbReference type="Pfam" id="PF00005">
    <property type="entry name" value="ABC_tran"/>
    <property type="match status" value="2"/>
</dbReference>
<dbReference type="SMART" id="SM00382">
    <property type="entry name" value="AAA"/>
    <property type="match status" value="2"/>
</dbReference>
<dbReference type="SUPFAM" id="SSF52540">
    <property type="entry name" value="P-loop containing nucleoside triphosphate hydrolases"/>
    <property type="match status" value="2"/>
</dbReference>
<dbReference type="PROSITE" id="PS00211">
    <property type="entry name" value="ABC_TRANSPORTER_1"/>
    <property type="match status" value="1"/>
</dbReference>
<dbReference type="PROSITE" id="PS50893">
    <property type="entry name" value="ABC_TRANSPORTER_2"/>
    <property type="match status" value="2"/>
</dbReference>
<dbReference type="PROSITE" id="PS51280">
    <property type="entry name" value="XYLG"/>
    <property type="match status" value="1"/>
</dbReference>